<evidence type="ECO:0000250" key="1"/>
<evidence type="ECO:0000255" key="2">
    <source>
        <dbReference type="HAMAP-Rule" id="MF_00103"/>
    </source>
</evidence>
<name>FPG_SALEP</name>
<reference key="1">
    <citation type="journal article" date="2008" name="Genome Res.">
        <title>Comparative genome analysis of Salmonella enteritidis PT4 and Salmonella gallinarum 287/91 provides insights into evolutionary and host adaptation pathways.</title>
        <authorList>
            <person name="Thomson N.R."/>
            <person name="Clayton D.J."/>
            <person name="Windhorst D."/>
            <person name="Vernikos G."/>
            <person name="Davidson S."/>
            <person name="Churcher C."/>
            <person name="Quail M.A."/>
            <person name="Stevens M."/>
            <person name="Jones M.A."/>
            <person name="Watson M."/>
            <person name="Barron A."/>
            <person name="Layton A."/>
            <person name="Pickard D."/>
            <person name="Kingsley R.A."/>
            <person name="Bignell A."/>
            <person name="Clark L."/>
            <person name="Harris B."/>
            <person name="Ormond D."/>
            <person name="Abdellah Z."/>
            <person name="Brooks K."/>
            <person name="Cherevach I."/>
            <person name="Chillingworth T."/>
            <person name="Woodward J."/>
            <person name="Norberczak H."/>
            <person name="Lord A."/>
            <person name="Arrowsmith C."/>
            <person name="Jagels K."/>
            <person name="Moule S."/>
            <person name="Mungall K."/>
            <person name="Saunders M."/>
            <person name="Whitehead S."/>
            <person name="Chabalgoity J.A."/>
            <person name="Maskell D."/>
            <person name="Humphreys T."/>
            <person name="Roberts M."/>
            <person name="Barrow P.A."/>
            <person name="Dougan G."/>
            <person name="Parkhill J."/>
        </authorList>
    </citation>
    <scope>NUCLEOTIDE SEQUENCE [LARGE SCALE GENOMIC DNA]</scope>
    <source>
        <strain>P125109</strain>
    </source>
</reference>
<accession>B5R5F9</accession>
<feature type="initiator methionine" description="Removed" evidence="1">
    <location>
        <position position="1"/>
    </location>
</feature>
<feature type="chain" id="PRO_1000094072" description="Formamidopyrimidine-DNA glycosylase">
    <location>
        <begin position="2"/>
        <end position="269"/>
    </location>
</feature>
<feature type="zinc finger region" description="FPG-type" evidence="2">
    <location>
        <begin position="235"/>
        <end position="269"/>
    </location>
</feature>
<feature type="active site" description="Schiff-base intermediate with DNA" evidence="2">
    <location>
        <position position="2"/>
    </location>
</feature>
<feature type="active site" description="Proton donor" evidence="2">
    <location>
        <position position="3"/>
    </location>
</feature>
<feature type="active site" description="Proton donor; for beta-elimination activity" evidence="2">
    <location>
        <position position="57"/>
    </location>
</feature>
<feature type="active site" description="Proton donor; for delta-elimination activity" evidence="2">
    <location>
        <position position="259"/>
    </location>
</feature>
<feature type="binding site" evidence="2">
    <location>
        <position position="90"/>
    </location>
    <ligand>
        <name>DNA</name>
        <dbReference type="ChEBI" id="CHEBI:16991"/>
    </ligand>
</feature>
<feature type="binding site" evidence="2">
    <location>
        <position position="109"/>
    </location>
    <ligand>
        <name>DNA</name>
        <dbReference type="ChEBI" id="CHEBI:16991"/>
    </ligand>
</feature>
<feature type="binding site" evidence="2">
    <location>
        <position position="150"/>
    </location>
    <ligand>
        <name>DNA</name>
        <dbReference type="ChEBI" id="CHEBI:16991"/>
    </ligand>
</feature>
<sequence>MPELPEVETSRRGIEPHLVGATILHAHIRNGRLRWPVSDEIYRLSDTPVLSVQRRAKYLLLELPDGWIIIHLGMSGSLRILSEALPAEKHDHVDLVMSNGKILRYTDPRRFGAWLWTKELEGHNVLAHLGPEPLSDEFNGEYLQQKCAKKKTAIKPWLMDNKLVVGVGNIYASESLFAAGIHPDRLASSLSTEECDLLARVIKAVLLRSIEQGGTTLKDFLQSDGKPGYFAQELQVYGRKGEPCRVCGTPIVATKHAQRATFYCRHCQK</sequence>
<organism>
    <name type="scientific">Salmonella enteritidis PT4 (strain P125109)</name>
    <dbReference type="NCBI Taxonomy" id="550537"/>
    <lineage>
        <taxon>Bacteria</taxon>
        <taxon>Pseudomonadati</taxon>
        <taxon>Pseudomonadota</taxon>
        <taxon>Gammaproteobacteria</taxon>
        <taxon>Enterobacterales</taxon>
        <taxon>Enterobacteriaceae</taxon>
        <taxon>Salmonella</taxon>
    </lineage>
</organism>
<gene>
    <name evidence="2" type="primary">mutM</name>
    <name evidence="2" type="synonym">fpg</name>
    <name type="ordered locus">SEN3548</name>
</gene>
<keyword id="KW-0227">DNA damage</keyword>
<keyword id="KW-0234">DNA repair</keyword>
<keyword id="KW-0238">DNA-binding</keyword>
<keyword id="KW-0326">Glycosidase</keyword>
<keyword id="KW-0378">Hydrolase</keyword>
<keyword id="KW-0456">Lyase</keyword>
<keyword id="KW-0479">Metal-binding</keyword>
<keyword id="KW-0511">Multifunctional enzyme</keyword>
<keyword id="KW-0862">Zinc</keyword>
<keyword id="KW-0863">Zinc-finger</keyword>
<protein>
    <recommendedName>
        <fullName evidence="2">Formamidopyrimidine-DNA glycosylase</fullName>
        <shortName evidence="2">Fapy-DNA glycosylase</shortName>
        <ecNumber evidence="2">3.2.2.23</ecNumber>
    </recommendedName>
    <alternativeName>
        <fullName evidence="2">DNA-(apurinic or apyrimidinic site) lyase MutM</fullName>
        <shortName evidence="2">AP lyase MutM</shortName>
        <ecNumber evidence="2">4.2.99.18</ecNumber>
    </alternativeName>
</protein>
<comment type="function">
    <text evidence="2">Involved in base excision repair of DNA damaged by oxidation or by mutagenic agents. Acts as a DNA glycosylase that recognizes and removes damaged bases. Has a preference for oxidized purines, such as 7,8-dihydro-8-oxoguanine (8-oxoG). Has AP (apurinic/apyrimidinic) lyase activity and introduces nicks in the DNA strand. Cleaves the DNA backbone by beta-delta elimination to generate a single-strand break at the site of the removed base with both 3'- and 5'-phosphates.</text>
</comment>
<comment type="catalytic activity">
    <reaction evidence="2">
        <text>Hydrolysis of DNA containing ring-opened 7-methylguanine residues, releasing 2,6-diamino-4-hydroxy-5-(N-methyl)formamidopyrimidine.</text>
        <dbReference type="EC" id="3.2.2.23"/>
    </reaction>
</comment>
<comment type="catalytic activity">
    <reaction evidence="2">
        <text>2'-deoxyribonucleotide-(2'-deoxyribose 5'-phosphate)-2'-deoxyribonucleotide-DNA = a 3'-end 2'-deoxyribonucleotide-(2,3-dehydro-2,3-deoxyribose 5'-phosphate)-DNA + a 5'-end 5'-phospho-2'-deoxyribonucleoside-DNA + H(+)</text>
        <dbReference type="Rhea" id="RHEA:66592"/>
        <dbReference type="Rhea" id="RHEA-COMP:13180"/>
        <dbReference type="Rhea" id="RHEA-COMP:16897"/>
        <dbReference type="Rhea" id="RHEA-COMP:17067"/>
        <dbReference type="ChEBI" id="CHEBI:15378"/>
        <dbReference type="ChEBI" id="CHEBI:136412"/>
        <dbReference type="ChEBI" id="CHEBI:157695"/>
        <dbReference type="ChEBI" id="CHEBI:167181"/>
        <dbReference type="EC" id="4.2.99.18"/>
    </reaction>
</comment>
<comment type="cofactor">
    <cofactor evidence="2">
        <name>Zn(2+)</name>
        <dbReference type="ChEBI" id="CHEBI:29105"/>
    </cofactor>
    <text evidence="2">Binds 1 zinc ion per subunit.</text>
</comment>
<comment type="subunit">
    <text evidence="2">Monomer.</text>
</comment>
<comment type="similarity">
    <text evidence="2">Belongs to the FPG family.</text>
</comment>
<proteinExistence type="inferred from homology"/>
<dbReference type="EC" id="3.2.2.23" evidence="2"/>
<dbReference type="EC" id="4.2.99.18" evidence="2"/>
<dbReference type="EMBL" id="AM933172">
    <property type="protein sequence ID" value="CAR35127.1"/>
    <property type="molecule type" value="Genomic_DNA"/>
</dbReference>
<dbReference type="RefSeq" id="WP_001114515.1">
    <property type="nucleotide sequence ID" value="NC_011294.1"/>
</dbReference>
<dbReference type="SMR" id="B5R5F9"/>
<dbReference type="KEGG" id="set:SEN3548"/>
<dbReference type="HOGENOM" id="CLU_038423_1_1_6"/>
<dbReference type="Proteomes" id="UP000000613">
    <property type="component" value="Chromosome"/>
</dbReference>
<dbReference type="GO" id="GO:0034039">
    <property type="term" value="F:8-oxo-7,8-dihydroguanine DNA N-glycosylase activity"/>
    <property type="evidence" value="ECO:0007669"/>
    <property type="project" value="TreeGrafter"/>
</dbReference>
<dbReference type="GO" id="GO:0140078">
    <property type="term" value="F:class I DNA-(apurinic or apyrimidinic site) endonuclease activity"/>
    <property type="evidence" value="ECO:0007669"/>
    <property type="project" value="UniProtKB-EC"/>
</dbReference>
<dbReference type="GO" id="GO:0003684">
    <property type="term" value="F:damaged DNA binding"/>
    <property type="evidence" value="ECO:0007669"/>
    <property type="project" value="InterPro"/>
</dbReference>
<dbReference type="GO" id="GO:0008270">
    <property type="term" value="F:zinc ion binding"/>
    <property type="evidence" value="ECO:0007669"/>
    <property type="project" value="UniProtKB-UniRule"/>
</dbReference>
<dbReference type="GO" id="GO:0006284">
    <property type="term" value="P:base-excision repair"/>
    <property type="evidence" value="ECO:0007669"/>
    <property type="project" value="InterPro"/>
</dbReference>
<dbReference type="CDD" id="cd08966">
    <property type="entry name" value="EcFpg-like_N"/>
    <property type="match status" value="1"/>
</dbReference>
<dbReference type="FunFam" id="1.10.8.50:FF:000003">
    <property type="entry name" value="Formamidopyrimidine-DNA glycosylase"/>
    <property type="match status" value="1"/>
</dbReference>
<dbReference type="FunFam" id="3.20.190.10:FF:000001">
    <property type="entry name" value="Formamidopyrimidine-DNA glycosylase"/>
    <property type="match status" value="1"/>
</dbReference>
<dbReference type="Gene3D" id="1.10.8.50">
    <property type="match status" value="1"/>
</dbReference>
<dbReference type="Gene3D" id="3.20.190.10">
    <property type="entry name" value="MutM-like, N-terminal"/>
    <property type="match status" value="1"/>
</dbReference>
<dbReference type="HAMAP" id="MF_00103">
    <property type="entry name" value="Fapy_DNA_glycosyl"/>
    <property type="match status" value="1"/>
</dbReference>
<dbReference type="InterPro" id="IPR015886">
    <property type="entry name" value="DNA_glyclase/AP_lyase_DNA-bd"/>
</dbReference>
<dbReference type="InterPro" id="IPR015887">
    <property type="entry name" value="DNA_glyclase_Znf_dom_DNA_BS"/>
</dbReference>
<dbReference type="InterPro" id="IPR020629">
    <property type="entry name" value="Formamido-pyr_DNA_Glyclase"/>
</dbReference>
<dbReference type="InterPro" id="IPR012319">
    <property type="entry name" value="FPG_cat"/>
</dbReference>
<dbReference type="InterPro" id="IPR035937">
    <property type="entry name" value="MutM-like_N-ter"/>
</dbReference>
<dbReference type="InterPro" id="IPR010979">
    <property type="entry name" value="Ribosomal_uS13-like_H2TH"/>
</dbReference>
<dbReference type="InterPro" id="IPR000214">
    <property type="entry name" value="Znf_DNA_glyclase/AP_lyase"/>
</dbReference>
<dbReference type="InterPro" id="IPR010663">
    <property type="entry name" value="Znf_FPG/IleRS"/>
</dbReference>
<dbReference type="NCBIfam" id="TIGR00577">
    <property type="entry name" value="fpg"/>
    <property type="match status" value="1"/>
</dbReference>
<dbReference type="NCBIfam" id="NF002211">
    <property type="entry name" value="PRK01103.1"/>
    <property type="match status" value="1"/>
</dbReference>
<dbReference type="PANTHER" id="PTHR22993">
    <property type="entry name" value="FORMAMIDOPYRIMIDINE-DNA GLYCOSYLASE"/>
    <property type="match status" value="1"/>
</dbReference>
<dbReference type="PANTHER" id="PTHR22993:SF9">
    <property type="entry name" value="FORMAMIDOPYRIMIDINE-DNA GLYCOSYLASE"/>
    <property type="match status" value="1"/>
</dbReference>
<dbReference type="Pfam" id="PF01149">
    <property type="entry name" value="Fapy_DNA_glyco"/>
    <property type="match status" value="1"/>
</dbReference>
<dbReference type="Pfam" id="PF06831">
    <property type="entry name" value="H2TH"/>
    <property type="match status" value="1"/>
</dbReference>
<dbReference type="Pfam" id="PF06827">
    <property type="entry name" value="zf-FPG_IleRS"/>
    <property type="match status" value="1"/>
</dbReference>
<dbReference type="SMART" id="SM00898">
    <property type="entry name" value="Fapy_DNA_glyco"/>
    <property type="match status" value="1"/>
</dbReference>
<dbReference type="SMART" id="SM01232">
    <property type="entry name" value="H2TH"/>
    <property type="match status" value="1"/>
</dbReference>
<dbReference type="SUPFAM" id="SSF57716">
    <property type="entry name" value="Glucocorticoid receptor-like (DNA-binding domain)"/>
    <property type="match status" value="1"/>
</dbReference>
<dbReference type="SUPFAM" id="SSF81624">
    <property type="entry name" value="N-terminal domain of MutM-like DNA repair proteins"/>
    <property type="match status" value="1"/>
</dbReference>
<dbReference type="SUPFAM" id="SSF46946">
    <property type="entry name" value="S13-like H2TH domain"/>
    <property type="match status" value="1"/>
</dbReference>
<dbReference type="PROSITE" id="PS51068">
    <property type="entry name" value="FPG_CAT"/>
    <property type="match status" value="1"/>
</dbReference>
<dbReference type="PROSITE" id="PS01242">
    <property type="entry name" value="ZF_FPG_1"/>
    <property type="match status" value="1"/>
</dbReference>
<dbReference type="PROSITE" id="PS51066">
    <property type="entry name" value="ZF_FPG_2"/>
    <property type="match status" value="1"/>
</dbReference>